<evidence type="ECO:0000255" key="1">
    <source>
        <dbReference type="HAMAP-Rule" id="MF_01592"/>
    </source>
</evidence>
<gene>
    <name evidence="1" type="primary">nudL</name>
    <name type="ordered locus">SSPA0978</name>
</gene>
<accession>B5BHD1</accession>
<protein>
    <recommendedName>
        <fullName evidence="1">Uncharacterized Nudix hydrolase NudL</fullName>
        <ecNumber evidence="1">3.6.1.-</ecNumber>
    </recommendedName>
</protein>
<comment type="function">
    <text evidence="1">Probably mediates the hydrolysis of some nucleoside diphosphate derivatives.</text>
</comment>
<comment type="cofactor">
    <cofactor evidence="1">
        <name>Mn(2+)</name>
        <dbReference type="ChEBI" id="CHEBI:29035"/>
    </cofactor>
    <cofactor evidence="1">
        <name>Mg(2+)</name>
        <dbReference type="ChEBI" id="CHEBI:18420"/>
    </cofactor>
</comment>
<comment type="similarity">
    <text evidence="1">Belongs to the Nudix hydrolase family. PCD1 subfamily.</text>
</comment>
<name>NUDL_SALPK</name>
<feature type="chain" id="PRO_1000147826" description="Uncharacterized Nudix hydrolase NudL">
    <location>
        <begin position="1"/>
        <end position="192"/>
    </location>
</feature>
<feature type="domain" description="Nudix hydrolase" evidence="1">
    <location>
        <begin position="29"/>
        <end position="160"/>
    </location>
</feature>
<feature type="short sequence motif" description="Nudix box">
    <location>
        <begin position="67"/>
        <end position="89"/>
    </location>
</feature>
<feature type="binding site" evidence="1">
    <location>
        <position position="83"/>
    </location>
    <ligand>
        <name>Mg(2+)</name>
        <dbReference type="ChEBI" id="CHEBI:18420"/>
    </ligand>
</feature>
<feature type="binding site" evidence="1">
    <location>
        <position position="87"/>
    </location>
    <ligand>
        <name>Mg(2+)</name>
        <dbReference type="ChEBI" id="CHEBI:18420"/>
    </ligand>
</feature>
<proteinExistence type="inferred from homology"/>
<dbReference type="EC" id="3.6.1.-" evidence="1"/>
<dbReference type="EMBL" id="FM200053">
    <property type="protein sequence ID" value="CAR59129.1"/>
    <property type="molecule type" value="Genomic_DNA"/>
</dbReference>
<dbReference type="RefSeq" id="WP_000381531.1">
    <property type="nucleotide sequence ID" value="NC_011147.1"/>
</dbReference>
<dbReference type="SMR" id="B5BHD1"/>
<dbReference type="KEGG" id="sek:SSPA0978"/>
<dbReference type="HOGENOM" id="CLU_040940_5_2_6"/>
<dbReference type="Proteomes" id="UP000001869">
    <property type="component" value="Chromosome"/>
</dbReference>
<dbReference type="GO" id="GO:0010945">
    <property type="term" value="F:coenzyme A diphosphatase activity"/>
    <property type="evidence" value="ECO:0007669"/>
    <property type="project" value="InterPro"/>
</dbReference>
<dbReference type="GO" id="GO:0000287">
    <property type="term" value="F:magnesium ion binding"/>
    <property type="evidence" value="ECO:0007669"/>
    <property type="project" value="UniProtKB-UniRule"/>
</dbReference>
<dbReference type="GO" id="GO:0030145">
    <property type="term" value="F:manganese ion binding"/>
    <property type="evidence" value="ECO:0007669"/>
    <property type="project" value="UniProtKB-UniRule"/>
</dbReference>
<dbReference type="GO" id="GO:0009132">
    <property type="term" value="P:nucleoside diphosphate metabolic process"/>
    <property type="evidence" value="ECO:0007669"/>
    <property type="project" value="InterPro"/>
</dbReference>
<dbReference type="CDD" id="cd03426">
    <property type="entry name" value="NUDIX_CoAse_Nudt7"/>
    <property type="match status" value="1"/>
</dbReference>
<dbReference type="Gene3D" id="3.90.79.10">
    <property type="entry name" value="Nucleoside Triphosphate Pyrophosphohydrolase"/>
    <property type="match status" value="1"/>
</dbReference>
<dbReference type="HAMAP" id="MF_01592">
    <property type="entry name" value="Nudix_NudL"/>
    <property type="match status" value="1"/>
</dbReference>
<dbReference type="InterPro" id="IPR045121">
    <property type="entry name" value="CoAse"/>
</dbReference>
<dbReference type="InterPro" id="IPR015797">
    <property type="entry name" value="NUDIX_hydrolase-like_dom_sf"/>
</dbReference>
<dbReference type="InterPro" id="IPR000086">
    <property type="entry name" value="NUDIX_hydrolase_dom"/>
</dbReference>
<dbReference type="InterPro" id="IPR000059">
    <property type="entry name" value="NUDIX_hydrolase_NudL_CS"/>
</dbReference>
<dbReference type="InterPro" id="IPR023735">
    <property type="entry name" value="Nudix_NudL"/>
</dbReference>
<dbReference type="NCBIfam" id="NF007980">
    <property type="entry name" value="PRK10707.1"/>
    <property type="match status" value="1"/>
</dbReference>
<dbReference type="PANTHER" id="PTHR12992:SF11">
    <property type="entry name" value="MITOCHONDRIAL COENZYME A DIPHOSPHATASE NUDT8"/>
    <property type="match status" value="1"/>
</dbReference>
<dbReference type="PANTHER" id="PTHR12992">
    <property type="entry name" value="NUDIX HYDROLASE"/>
    <property type="match status" value="1"/>
</dbReference>
<dbReference type="Pfam" id="PF00293">
    <property type="entry name" value="NUDIX"/>
    <property type="match status" value="1"/>
</dbReference>
<dbReference type="SUPFAM" id="SSF55811">
    <property type="entry name" value="Nudix"/>
    <property type="match status" value="1"/>
</dbReference>
<dbReference type="PROSITE" id="PS51462">
    <property type="entry name" value="NUDIX"/>
    <property type="match status" value="1"/>
</dbReference>
<dbReference type="PROSITE" id="PS01293">
    <property type="entry name" value="NUDIX_COA"/>
    <property type="match status" value="1"/>
</dbReference>
<reference key="1">
    <citation type="journal article" date="2009" name="BMC Genomics">
        <title>Pseudogene accumulation in the evolutionary histories of Salmonella enterica serovars Paratyphi A and Typhi.</title>
        <authorList>
            <person name="Holt K.E."/>
            <person name="Thomson N.R."/>
            <person name="Wain J."/>
            <person name="Langridge G.C."/>
            <person name="Hasan R."/>
            <person name="Bhutta Z.A."/>
            <person name="Quail M.A."/>
            <person name="Norbertczak H."/>
            <person name="Walker D."/>
            <person name="Simmonds M."/>
            <person name="White B."/>
            <person name="Bason N."/>
            <person name="Mungall K."/>
            <person name="Dougan G."/>
            <person name="Parkhill J."/>
        </authorList>
    </citation>
    <scope>NUCLEOTIDE SEQUENCE [LARGE SCALE GENOMIC DNA]</scope>
    <source>
        <strain>AKU_12601</strain>
    </source>
</reference>
<keyword id="KW-0378">Hydrolase</keyword>
<keyword id="KW-0460">Magnesium</keyword>
<keyword id="KW-0464">Manganese</keyword>
<keyword id="KW-0479">Metal-binding</keyword>
<sequence length="192" mass="21413">MDTSRLTLDHFLSRFQLLRPQITHETLNQRQAAVLIPVVRRPQPGLLLTQRAIHLRKHAGQVAFPGGAVDSTDASLIAAALREAQEEVAIPPQAVEVIGVLPPVDSVTGFQVTPVVGIIPPNLPWRASEDEVSAVFEMPLAQALQLGRYHPLDVYRRGNSHRVWLSWYEHYFVWGMTANILRELALQIGVKP</sequence>
<organism>
    <name type="scientific">Salmonella paratyphi A (strain AKU_12601)</name>
    <dbReference type="NCBI Taxonomy" id="554290"/>
    <lineage>
        <taxon>Bacteria</taxon>
        <taxon>Pseudomonadati</taxon>
        <taxon>Pseudomonadota</taxon>
        <taxon>Gammaproteobacteria</taxon>
        <taxon>Enterobacterales</taxon>
        <taxon>Enterobacteriaceae</taxon>
        <taxon>Salmonella</taxon>
    </lineage>
</organism>